<organism>
    <name type="scientific">Podospora comata</name>
    <dbReference type="NCBI Taxonomy" id="48703"/>
    <lineage>
        <taxon>Eukaryota</taxon>
        <taxon>Fungi</taxon>
        <taxon>Dikarya</taxon>
        <taxon>Ascomycota</taxon>
        <taxon>Pezizomycotina</taxon>
        <taxon>Sordariomycetes</taxon>
        <taxon>Sordariomycetidae</taxon>
        <taxon>Sordariales</taxon>
        <taxon>Podosporaceae</taxon>
        <taxon>Podospora</taxon>
    </lineage>
</organism>
<name>SPOK1_PODCO</name>
<accession>A0A447CCJ8</accession>
<accession>A0A059PWG2</accession>
<comment type="function">
    <text evidence="4 5 6">Promotes unequal transmission of alleles from the parental zygote to progeny spores by acting as poison/antidote system, leading to poisoning of progeny that do not inherit the allele (PubMed:24830502, PubMed:31347500). May possess DNA nuclease activity that leads to spore killing, and a kinase activity that confers resistance to the nuclease activity (PubMed:36537809). Can suppress meiotic drive by the P.anserina SPOK2, SPOK3 and SPOK4 proteins (PubMed:24830502, PubMed:31347500).</text>
</comment>
<comment type="subcellular location">
    <subcellularLocation>
        <location evidence="1">Cytoplasm</location>
    </subcellularLocation>
    <subcellularLocation>
        <location evidence="1">Nucleus</location>
    </subcellularLocation>
</comment>
<comment type="developmental stage">
    <text evidence="5">Present in both spores and vegetative cells.</text>
</comment>
<comment type="disruption phenotype">
    <text evidence="4">Sensitises spores to SPOK1 encoded poison.</text>
</comment>
<evidence type="ECO:0000250" key="1">
    <source>
        <dbReference type="UniProtKB" id="B2AFA8"/>
    </source>
</evidence>
<evidence type="ECO:0000255" key="2"/>
<evidence type="ECO:0000256" key="3">
    <source>
        <dbReference type="SAM" id="MobiDB-lite"/>
    </source>
</evidence>
<evidence type="ECO:0000269" key="4">
    <source>
    </source>
</evidence>
<evidence type="ECO:0000269" key="5">
    <source>
    </source>
</evidence>
<evidence type="ECO:0000269" key="6">
    <source>
    </source>
</evidence>
<evidence type="ECO:0000303" key="7">
    <source>
    </source>
</evidence>
<evidence type="ECO:0000303" key="8">
    <source>
    </source>
</evidence>
<evidence type="ECO:0000305" key="9"/>
<evidence type="ECO:0000312" key="10">
    <source>
        <dbReference type="EMBL" id="VBB81150.1"/>
    </source>
</evidence>
<keyword id="KW-0175">Coiled coil</keyword>
<keyword id="KW-0963">Cytoplasm</keyword>
<keyword id="KW-0539">Nucleus</keyword>
<keyword id="KW-0800">Toxin</keyword>
<sequence length="734" mass="83095">MSDKDRIAQLLRELEEAKARVEEAKAREAQERCEKERLQLEHRKTTFLEYLRNCHRHLYNALRLTDTSRSSTGYTKVVGKYYPKRLRPWTNFANVLHPRYFDLVQKICGQRQLFEPASTTKNLGTIISDHLAGNEKAIDRFEVDAVERPVQAILKVLATHEEAGKAYRCPEFRFSANLRELTQEDDGSSGADDNTSDGSLERRQQAGPNKRPTSKRKYICSNRQPDGVGIRMQPGGGQTQAFIYDYKAAHKVAIEHVRSATAKEHLFHEVVARINDNKLSRDKEVQRREQAEAFIAMALTQVFDYMITYGVSYGYVAAGRCLLLLYVDRDDWQTLYCHPCLPADDVGEPTNDWTDRLSHTAVAQLVSFCLSSFQSEALEGQSLETALSVANATLKTWSESYADVAYLGLEPAELSSAPSSQNTDISEYTSKAKPTGRNVALRSQSSCKPAAVLPQGNEHDEHDEDHSEPGASRSRLAANKRKRGPSSGGEDEDIAMADPEPTRQYCTQACLLGLKRGKDLDENCPNVSLHRFDGSSRHPVNAHRFTDMVKQQLLLSPYKGCRMVDFWGKRGAMGWLFKLELFPYGYTFVGKGTLEDRLSRLEHEGRVYARLDHLQGDVVPVHLGLVRLDRGYILPGLEFVVYMMLMSWAGQTPSASMADAETLKRESLTAIWSEGVDHGDDNRANYLWNAERCRIMIIDFDRARLFPPLKPRAVSRLSKPKRERGNRSRHQIRT</sequence>
<proteinExistence type="evidence at protein level"/>
<protein>
    <recommendedName>
        <fullName evidence="9">Meiotic driver SPOK1</fullName>
    </recommendedName>
    <alternativeName>
        <fullName evidence="7">Spore killer 1</fullName>
    </alternativeName>
</protein>
<dbReference type="EMBL" id="LR026968">
    <property type="protein sequence ID" value="VBB81150.1"/>
    <property type="molecule type" value="Genomic_DNA"/>
</dbReference>
<dbReference type="EMBL" id="JX560967">
    <property type="protein sequence ID" value="AGO59329.1"/>
    <property type="molecule type" value="Genomic_DNA"/>
</dbReference>
<dbReference type="VEuPathDB" id="FungiDB:PODANS_5_10"/>
<dbReference type="VEuPathDB" id="FungiDB:PODCO_500010"/>
<dbReference type="GO" id="GO:0005737">
    <property type="term" value="C:cytoplasm"/>
    <property type="evidence" value="ECO:0000314"/>
    <property type="project" value="UniProtKB"/>
</dbReference>
<dbReference type="GO" id="GO:0005634">
    <property type="term" value="C:nucleus"/>
    <property type="evidence" value="ECO:0000314"/>
    <property type="project" value="UniProtKB"/>
</dbReference>
<dbReference type="GO" id="GO:0004536">
    <property type="term" value="F:DNA nuclease activity"/>
    <property type="evidence" value="ECO:0000315"/>
    <property type="project" value="UniProtKB"/>
</dbReference>
<dbReference type="GO" id="GO:0016301">
    <property type="term" value="F:kinase activity"/>
    <property type="evidence" value="ECO:0000315"/>
    <property type="project" value="UniProtKB"/>
</dbReference>
<dbReference type="GO" id="GO:0090729">
    <property type="term" value="F:toxin activity"/>
    <property type="evidence" value="ECO:0007669"/>
    <property type="project" value="UniProtKB-KW"/>
</dbReference>
<dbReference type="GO" id="GO:0110134">
    <property type="term" value="P:meiotic drive"/>
    <property type="evidence" value="ECO:0000314"/>
    <property type="project" value="UniProtKB"/>
</dbReference>
<dbReference type="InterPro" id="IPR011009">
    <property type="entry name" value="Kinase-like_dom_sf"/>
</dbReference>
<dbReference type="SUPFAM" id="SSF56112">
    <property type="entry name" value="Protein kinase-like (PK-like)"/>
    <property type="match status" value="1"/>
</dbReference>
<reference key="1">
    <citation type="journal article" date="2014" name="PLoS Genet.">
        <title>Genes that bias mendelian segregation.</title>
        <authorList>
            <person name="Grognet P."/>
            <person name="Lalucque H."/>
            <person name="Malagnac F."/>
            <person name="Silar P."/>
        </authorList>
    </citation>
    <scope>NUCLEOTIDE SEQUENCE [GENOMIC DNA]</scope>
    <scope>FUNCTION</scope>
    <scope>DISRUPTION PHENOTYPE</scope>
    <source>
        <strain evidence="9">Td</strain>
    </source>
</reference>
<reference key="2">
    <citation type="submission" date="2018-02" db="EMBL/GenBank/DDBJ databases">
        <authorList>
            <person name="Silar P."/>
        </authorList>
    </citation>
    <scope>NUCLEOTIDE SEQUENCE [LARGE SCALE GENOMIC DNA]</scope>
    <source>
        <strain>T</strain>
    </source>
</reference>
<reference evidence="9" key="3">
    <citation type="journal article" date="2019" name="Elife">
        <title>Combinations of Spok genes create multiple meiotic drivers in Podospora.</title>
        <authorList>
            <person name="Vogan A.A."/>
            <person name="Ament-Velasquez S.L."/>
            <person name="Granger-Farbos A."/>
            <person name="Svedberg J."/>
            <person name="Bastiaans E."/>
            <person name="Debets A.J."/>
            <person name="Coustou V."/>
            <person name="Yvanne H."/>
            <person name="Clave C."/>
            <person name="Saupe S.J."/>
            <person name="Johannesson H."/>
        </authorList>
    </citation>
    <scope>FUNCTION</scope>
    <scope>DEVELOPMENTAL STAGE</scope>
    <source>
        <strain evidence="8">Td</strain>
    </source>
</reference>
<reference key="4">
    <citation type="journal article" date="2022" name="MBio">
        <title>A Natural Fungal Gene Drive Enacts Killing via DNA Disruption.</title>
        <authorList>
            <person name="Urquhart A.S."/>
            <person name="Gardiner D.M."/>
        </authorList>
    </citation>
    <scope>FUNCTION</scope>
    <scope>MUTAGENESIS OF LYS-247 AND ASP-680</scope>
</reference>
<feature type="chain" id="PRO_0000453035" description="Meiotic driver SPOK1">
    <location>
        <begin position="1"/>
        <end position="734"/>
    </location>
</feature>
<feature type="region of interest" description="Disordered" evidence="3">
    <location>
        <begin position="180"/>
        <end position="222"/>
    </location>
</feature>
<feature type="region of interest" description="Disordered" evidence="3">
    <location>
        <begin position="414"/>
        <end position="499"/>
    </location>
</feature>
<feature type="coiled-coil region" evidence="2">
    <location>
        <begin position="4"/>
        <end position="41"/>
    </location>
</feature>
<feature type="compositionally biased region" description="Polar residues" evidence="3">
    <location>
        <begin position="416"/>
        <end position="429"/>
    </location>
</feature>
<feature type="compositionally biased region" description="Basic and acidic residues" evidence="3">
    <location>
        <begin position="457"/>
        <end position="468"/>
    </location>
</feature>
<feature type="mutagenesis site" description="Abolishes poison activity." evidence="6">
    <original>K</original>
    <variation>A</variation>
    <location>
        <position position="247"/>
    </location>
</feature>
<feature type="mutagenesis site" description="Appears to retain poison activity while abolishing antidote activity." evidence="6">
    <original>D</original>
    <variation>A</variation>
    <location>
        <position position="680"/>
    </location>
</feature>
<gene>
    <name evidence="7" type="primary">SPOK1</name>
    <name evidence="10" type="ORF">PODCO_500010</name>
</gene>